<name>ACY2_PONAB</name>
<sequence length="313" mass="35665">MTSCHIAEEPIQKVAIFGGTHGNELTGVFLVKHWLENGAEIQRTGLEVKPFITNPRAVKKCTRYIDCDLNRIFDLENLGKKMSEDLPYEVRRAQEINHLFGPKDSEDSYDIIFDLHNTTSNMGCTLILEDSRNNFLIQMFHYIKTSLAPLPCYVYLIEHPSLKYATTRSIAKYPVGIEVGPQPQGVLRADILDQMRKMIKHALDFIHHFNEGKEFPPCAIEVYKIIEKVDYPRDENGEIAAVIHPNLQDQDWKPLHPGDPMFLTLDGKTIPLGGDCTVYPVFVNEAAYYEKKEAFAKTTKLTLNAKSIRCSLH</sequence>
<comment type="function">
    <text evidence="1">Catalyzes the deacetylation of N-acetylaspartic acid (NAA) to produce acetate and L-aspartate. NAA occurs in high concentration in brain and its hydrolysis NAA plays a significant part in the maintenance of intact white matter. In other tissues it acts as a scavenger of NAA from body fluids.</text>
</comment>
<comment type="catalytic activity">
    <reaction evidence="1">
        <text>an N-acyl-L-aspartate + H2O = a carboxylate + L-aspartate</text>
        <dbReference type="Rhea" id="RHEA:10872"/>
        <dbReference type="ChEBI" id="CHEBI:15377"/>
        <dbReference type="ChEBI" id="CHEBI:29067"/>
        <dbReference type="ChEBI" id="CHEBI:29991"/>
        <dbReference type="ChEBI" id="CHEBI:58497"/>
        <dbReference type="EC" id="3.5.1.15"/>
    </reaction>
    <physiologicalReaction direction="left-to-right" evidence="1">
        <dbReference type="Rhea" id="RHEA:10873"/>
    </physiologicalReaction>
</comment>
<comment type="catalytic activity">
    <reaction evidence="1">
        <text>N-acetyl-L-aspartate + H2O = L-aspartate + acetate</text>
        <dbReference type="Rhea" id="RHEA:59408"/>
        <dbReference type="ChEBI" id="CHEBI:15377"/>
        <dbReference type="ChEBI" id="CHEBI:16953"/>
        <dbReference type="ChEBI" id="CHEBI:29991"/>
        <dbReference type="ChEBI" id="CHEBI:30089"/>
    </reaction>
    <physiologicalReaction direction="left-to-right" evidence="1">
        <dbReference type="Rhea" id="RHEA:59409"/>
    </physiologicalReaction>
</comment>
<comment type="cofactor">
    <cofactor evidence="1">
        <name>Zn(2+)</name>
        <dbReference type="ChEBI" id="CHEBI:29105"/>
    </cofactor>
    <text evidence="1">Binds 1 zinc ion per subunit.</text>
</comment>
<comment type="subunit">
    <text evidence="1">Homodimer.</text>
</comment>
<comment type="subcellular location">
    <subcellularLocation>
        <location evidence="2">Cytoplasm</location>
    </subcellularLocation>
    <subcellularLocation>
        <location evidence="2">Nucleus</location>
    </subcellularLocation>
</comment>
<comment type="similarity">
    <text evidence="3">Belongs to the AspA/AstE family. Aspartoacylase subfamily.</text>
</comment>
<evidence type="ECO:0000250" key="1">
    <source>
        <dbReference type="UniProtKB" id="P45381"/>
    </source>
</evidence>
<evidence type="ECO:0000250" key="2">
    <source>
        <dbReference type="UniProtKB" id="Q9R1T5"/>
    </source>
</evidence>
<evidence type="ECO:0000305" key="3"/>
<dbReference type="EC" id="3.5.1.15" evidence="1"/>
<dbReference type="EMBL" id="CR859449">
    <property type="protein sequence ID" value="CAH91620.1"/>
    <property type="molecule type" value="mRNA"/>
</dbReference>
<dbReference type="SMR" id="Q5R9E0"/>
<dbReference type="FunCoup" id="Q5R9E0">
    <property type="interactions" value="362"/>
</dbReference>
<dbReference type="STRING" id="9601.ENSPPYP00000008799"/>
<dbReference type="eggNOG" id="ENOG502QRAK">
    <property type="taxonomic scope" value="Eukaryota"/>
</dbReference>
<dbReference type="InParanoid" id="Q5R9E0"/>
<dbReference type="Proteomes" id="UP000001595">
    <property type="component" value="Unplaced"/>
</dbReference>
<dbReference type="GO" id="GO:0005829">
    <property type="term" value="C:cytosol"/>
    <property type="evidence" value="ECO:0007669"/>
    <property type="project" value="TreeGrafter"/>
</dbReference>
<dbReference type="GO" id="GO:0005634">
    <property type="term" value="C:nucleus"/>
    <property type="evidence" value="ECO:0007669"/>
    <property type="project" value="UniProtKB-SubCell"/>
</dbReference>
<dbReference type="GO" id="GO:0019807">
    <property type="term" value="F:aspartoacylase activity"/>
    <property type="evidence" value="ECO:0000250"/>
    <property type="project" value="UniProtKB"/>
</dbReference>
<dbReference type="GO" id="GO:0016788">
    <property type="term" value="F:hydrolase activity, acting on ester bonds"/>
    <property type="evidence" value="ECO:0007669"/>
    <property type="project" value="InterPro"/>
</dbReference>
<dbReference type="GO" id="GO:0046872">
    <property type="term" value="F:metal ion binding"/>
    <property type="evidence" value="ECO:0007669"/>
    <property type="project" value="UniProtKB-KW"/>
</dbReference>
<dbReference type="CDD" id="cd06909">
    <property type="entry name" value="M14_ASPA"/>
    <property type="match status" value="1"/>
</dbReference>
<dbReference type="FunFam" id="2.20.25.160:FF:000001">
    <property type="entry name" value="Aspartoacylase"/>
    <property type="match status" value="1"/>
</dbReference>
<dbReference type="FunFam" id="3.40.630.10:FF:000025">
    <property type="entry name" value="aspartoacylase"/>
    <property type="match status" value="1"/>
</dbReference>
<dbReference type="Gene3D" id="2.20.25.160">
    <property type="match status" value="1"/>
</dbReference>
<dbReference type="Gene3D" id="3.40.630.10">
    <property type="entry name" value="Zn peptidases"/>
    <property type="match status" value="1"/>
</dbReference>
<dbReference type="HAMAP" id="MF_00704">
    <property type="entry name" value="Aspartoacylase"/>
    <property type="match status" value="1"/>
</dbReference>
<dbReference type="InterPro" id="IPR050178">
    <property type="entry name" value="AspA/AstE_fam"/>
</dbReference>
<dbReference type="InterPro" id="IPR016708">
    <property type="entry name" value="Aspartoacylase"/>
</dbReference>
<dbReference type="InterPro" id="IPR055438">
    <property type="entry name" value="AstE_AspA_cat"/>
</dbReference>
<dbReference type="InterPro" id="IPR007036">
    <property type="entry name" value="Aste_AspA_hybrid_dom"/>
</dbReference>
<dbReference type="NCBIfam" id="NF002601">
    <property type="entry name" value="PRK02259.1"/>
    <property type="match status" value="1"/>
</dbReference>
<dbReference type="PANTHER" id="PTHR15162">
    <property type="entry name" value="ASPARTOACYLASE"/>
    <property type="match status" value="1"/>
</dbReference>
<dbReference type="PANTHER" id="PTHR15162:SF9">
    <property type="entry name" value="ASPARTOACYLASE"/>
    <property type="match status" value="1"/>
</dbReference>
<dbReference type="Pfam" id="PF24827">
    <property type="entry name" value="AstE_AspA_cat"/>
    <property type="match status" value="1"/>
</dbReference>
<dbReference type="Pfam" id="PF04952">
    <property type="entry name" value="AstE_AspA_hybrid"/>
    <property type="match status" value="1"/>
</dbReference>
<dbReference type="PIRSF" id="PIRSF018001">
    <property type="entry name" value="Aspartoacylase"/>
    <property type="match status" value="1"/>
</dbReference>
<dbReference type="SUPFAM" id="SSF53187">
    <property type="entry name" value="Zn-dependent exopeptidases"/>
    <property type="match status" value="1"/>
</dbReference>
<feature type="chain" id="PRO_0000290195" description="Aspartoacylase">
    <location>
        <begin position="1"/>
        <end position="313"/>
    </location>
</feature>
<feature type="active site" description="Proton donor/acceptor" evidence="1">
    <location>
        <position position="178"/>
    </location>
</feature>
<feature type="binding site" evidence="1">
    <location>
        <position position="21"/>
    </location>
    <ligand>
        <name>Zn(2+)</name>
        <dbReference type="ChEBI" id="CHEBI:29105"/>
    </ligand>
</feature>
<feature type="binding site" evidence="1">
    <location>
        <position position="24"/>
    </location>
    <ligand>
        <name>Zn(2+)</name>
        <dbReference type="ChEBI" id="CHEBI:29105"/>
    </ligand>
</feature>
<feature type="binding site" evidence="1">
    <location>
        <position position="63"/>
    </location>
    <ligand>
        <name>N-acetyl-L-aspartate</name>
        <dbReference type="ChEBI" id="CHEBI:16953"/>
    </ligand>
</feature>
<feature type="binding site" evidence="1">
    <location>
        <position position="70"/>
    </location>
    <ligand>
        <name>N-acetyl-L-aspartate</name>
        <dbReference type="ChEBI" id="CHEBI:16953"/>
    </ligand>
</feature>
<feature type="binding site" evidence="1">
    <location>
        <position position="71"/>
    </location>
    <ligand>
        <name>N-acetyl-L-aspartate</name>
        <dbReference type="ChEBI" id="CHEBI:16953"/>
    </ligand>
</feature>
<feature type="binding site" evidence="1">
    <location>
        <position position="116"/>
    </location>
    <ligand>
        <name>Zn(2+)</name>
        <dbReference type="ChEBI" id="CHEBI:29105"/>
    </ligand>
</feature>
<feature type="binding site" evidence="1">
    <location>
        <position position="164"/>
    </location>
    <ligand>
        <name>N-acetyl-L-aspartate</name>
        <dbReference type="ChEBI" id="CHEBI:16953"/>
    </ligand>
</feature>
<feature type="binding site" evidence="1">
    <location>
        <position position="168"/>
    </location>
    <ligand>
        <name>N-acetyl-L-aspartate</name>
        <dbReference type="ChEBI" id="CHEBI:16953"/>
    </ligand>
</feature>
<feature type="binding site" evidence="1">
    <location>
        <position position="288"/>
    </location>
    <ligand>
        <name>N-acetyl-L-aspartate</name>
        <dbReference type="ChEBI" id="CHEBI:16953"/>
    </ligand>
</feature>
<feature type="site" description="Transition state stabilizer" evidence="1">
    <location>
        <position position="63"/>
    </location>
</feature>
<accession>Q5R9E0</accession>
<reference key="1">
    <citation type="submission" date="2004-11" db="EMBL/GenBank/DDBJ databases">
        <authorList>
            <consortium name="The German cDNA consortium"/>
        </authorList>
    </citation>
    <scope>NUCLEOTIDE SEQUENCE [LARGE SCALE MRNA]</scope>
    <source>
        <tissue>Kidney</tissue>
    </source>
</reference>
<proteinExistence type="evidence at transcript level"/>
<protein>
    <recommendedName>
        <fullName evidence="1">Aspartoacylase</fullName>
        <ecNumber evidence="1">3.5.1.15</ecNumber>
    </recommendedName>
    <alternativeName>
        <fullName>Aminoacylase-2</fullName>
        <shortName>ACY-2</shortName>
    </alternativeName>
</protein>
<gene>
    <name evidence="1" type="primary">ASPA</name>
</gene>
<keyword id="KW-0963">Cytoplasm</keyword>
<keyword id="KW-0378">Hydrolase</keyword>
<keyword id="KW-0479">Metal-binding</keyword>
<keyword id="KW-0539">Nucleus</keyword>
<keyword id="KW-1185">Reference proteome</keyword>
<keyword id="KW-0862">Zinc</keyword>
<organism>
    <name type="scientific">Pongo abelii</name>
    <name type="common">Sumatran orangutan</name>
    <name type="synonym">Pongo pygmaeus abelii</name>
    <dbReference type="NCBI Taxonomy" id="9601"/>
    <lineage>
        <taxon>Eukaryota</taxon>
        <taxon>Metazoa</taxon>
        <taxon>Chordata</taxon>
        <taxon>Craniata</taxon>
        <taxon>Vertebrata</taxon>
        <taxon>Euteleostomi</taxon>
        <taxon>Mammalia</taxon>
        <taxon>Eutheria</taxon>
        <taxon>Euarchontoglires</taxon>
        <taxon>Primates</taxon>
        <taxon>Haplorrhini</taxon>
        <taxon>Catarrhini</taxon>
        <taxon>Hominidae</taxon>
        <taxon>Pongo</taxon>
    </lineage>
</organism>